<protein>
    <recommendedName>
        <fullName evidence="1">Large ribosomal subunit protein bL19</fullName>
    </recommendedName>
    <alternativeName>
        <fullName evidence="2">50S ribosomal protein L19</fullName>
    </alternativeName>
</protein>
<accession>B2JA71</accession>
<organism>
    <name type="scientific">Nostoc punctiforme (strain ATCC 29133 / PCC 73102)</name>
    <dbReference type="NCBI Taxonomy" id="63737"/>
    <lineage>
        <taxon>Bacteria</taxon>
        <taxon>Bacillati</taxon>
        <taxon>Cyanobacteriota</taxon>
        <taxon>Cyanophyceae</taxon>
        <taxon>Nostocales</taxon>
        <taxon>Nostocaceae</taxon>
        <taxon>Nostoc</taxon>
    </lineage>
</organism>
<sequence length="120" mass="13807">MSAQEIIRSIEAEQLKSNLPDIYVGDTVKVGVKIKEGEKYRVQPYEGVVIAKRNGGINETITVRKVFQGVGVERVFLLHSPRIDSIKVLRRGKVRRAKLYYLRDRVGKATRIKQRFDRPL</sequence>
<gene>
    <name evidence="1" type="primary">rplS</name>
    <name evidence="1" type="synonym">rpl19</name>
    <name type="ordered locus">Npun_F5848</name>
</gene>
<evidence type="ECO:0000255" key="1">
    <source>
        <dbReference type="HAMAP-Rule" id="MF_00402"/>
    </source>
</evidence>
<evidence type="ECO:0000305" key="2"/>
<dbReference type="EMBL" id="CP001037">
    <property type="protein sequence ID" value="ACC84146.1"/>
    <property type="molecule type" value="Genomic_DNA"/>
</dbReference>
<dbReference type="RefSeq" id="WP_012412089.1">
    <property type="nucleotide sequence ID" value="NC_010628.1"/>
</dbReference>
<dbReference type="SMR" id="B2JA71"/>
<dbReference type="STRING" id="63737.Npun_F5848"/>
<dbReference type="EnsemblBacteria" id="ACC84146">
    <property type="protein sequence ID" value="ACC84146"/>
    <property type="gene ID" value="Npun_F5848"/>
</dbReference>
<dbReference type="KEGG" id="npu:Npun_F5848"/>
<dbReference type="eggNOG" id="COG0335">
    <property type="taxonomic scope" value="Bacteria"/>
</dbReference>
<dbReference type="HOGENOM" id="CLU_103507_2_0_3"/>
<dbReference type="OrthoDB" id="9803541at2"/>
<dbReference type="PhylomeDB" id="B2JA71"/>
<dbReference type="Proteomes" id="UP000001191">
    <property type="component" value="Chromosome"/>
</dbReference>
<dbReference type="GO" id="GO:0022625">
    <property type="term" value="C:cytosolic large ribosomal subunit"/>
    <property type="evidence" value="ECO:0007669"/>
    <property type="project" value="TreeGrafter"/>
</dbReference>
<dbReference type="GO" id="GO:0003735">
    <property type="term" value="F:structural constituent of ribosome"/>
    <property type="evidence" value="ECO:0007669"/>
    <property type="project" value="InterPro"/>
</dbReference>
<dbReference type="GO" id="GO:0006412">
    <property type="term" value="P:translation"/>
    <property type="evidence" value="ECO:0007669"/>
    <property type="project" value="UniProtKB-UniRule"/>
</dbReference>
<dbReference type="FunFam" id="2.30.30.790:FF:000001">
    <property type="entry name" value="50S ribosomal protein L19"/>
    <property type="match status" value="1"/>
</dbReference>
<dbReference type="Gene3D" id="2.30.30.790">
    <property type="match status" value="1"/>
</dbReference>
<dbReference type="HAMAP" id="MF_00402">
    <property type="entry name" value="Ribosomal_bL19"/>
    <property type="match status" value="1"/>
</dbReference>
<dbReference type="InterPro" id="IPR001857">
    <property type="entry name" value="Ribosomal_bL19"/>
</dbReference>
<dbReference type="InterPro" id="IPR018257">
    <property type="entry name" value="Ribosomal_bL19_CS"/>
</dbReference>
<dbReference type="InterPro" id="IPR038657">
    <property type="entry name" value="Ribosomal_bL19_sf"/>
</dbReference>
<dbReference type="InterPro" id="IPR008991">
    <property type="entry name" value="Translation_prot_SH3-like_sf"/>
</dbReference>
<dbReference type="NCBIfam" id="TIGR01024">
    <property type="entry name" value="rplS_bact"/>
    <property type="match status" value="1"/>
</dbReference>
<dbReference type="PANTHER" id="PTHR15680:SF9">
    <property type="entry name" value="LARGE RIBOSOMAL SUBUNIT PROTEIN BL19M"/>
    <property type="match status" value="1"/>
</dbReference>
<dbReference type="PANTHER" id="PTHR15680">
    <property type="entry name" value="RIBOSOMAL PROTEIN L19"/>
    <property type="match status" value="1"/>
</dbReference>
<dbReference type="Pfam" id="PF01245">
    <property type="entry name" value="Ribosomal_L19"/>
    <property type="match status" value="1"/>
</dbReference>
<dbReference type="PIRSF" id="PIRSF002191">
    <property type="entry name" value="Ribosomal_L19"/>
    <property type="match status" value="1"/>
</dbReference>
<dbReference type="PRINTS" id="PR00061">
    <property type="entry name" value="RIBOSOMALL19"/>
</dbReference>
<dbReference type="SUPFAM" id="SSF50104">
    <property type="entry name" value="Translation proteins SH3-like domain"/>
    <property type="match status" value="1"/>
</dbReference>
<dbReference type="PROSITE" id="PS01015">
    <property type="entry name" value="RIBOSOMAL_L19"/>
    <property type="match status" value="1"/>
</dbReference>
<feature type="chain" id="PRO_1000123348" description="Large ribosomal subunit protein bL19">
    <location>
        <begin position="1"/>
        <end position="120"/>
    </location>
</feature>
<reference key="1">
    <citation type="journal article" date="2013" name="Plant Physiol.">
        <title>A Nostoc punctiforme Sugar Transporter Necessary to Establish a Cyanobacterium-Plant Symbiosis.</title>
        <authorList>
            <person name="Ekman M."/>
            <person name="Picossi S."/>
            <person name="Campbell E.L."/>
            <person name="Meeks J.C."/>
            <person name="Flores E."/>
        </authorList>
    </citation>
    <scope>NUCLEOTIDE SEQUENCE [LARGE SCALE GENOMIC DNA]</scope>
    <source>
        <strain>ATCC 29133 / PCC 73102</strain>
    </source>
</reference>
<comment type="function">
    <text evidence="1">This protein is located at the 30S-50S ribosomal subunit interface and may play a role in the structure and function of the aminoacyl-tRNA binding site.</text>
</comment>
<comment type="similarity">
    <text evidence="1">Belongs to the bacterial ribosomal protein bL19 family.</text>
</comment>
<name>RL19_NOSP7</name>
<proteinExistence type="inferred from homology"/>
<keyword id="KW-1185">Reference proteome</keyword>
<keyword id="KW-0687">Ribonucleoprotein</keyword>
<keyword id="KW-0689">Ribosomal protein</keyword>